<feature type="chain" id="PRO_1000098450" description="Methionyl-tRNA formyltransferase">
    <location>
        <begin position="1"/>
        <end position="311"/>
    </location>
</feature>
<feature type="binding site" evidence="1">
    <location>
        <begin position="110"/>
        <end position="113"/>
    </location>
    <ligand>
        <name>(6S)-5,6,7,8-tetrahydrofolate</name>
        <dbReference type="ChEBI" id="CHEBI:57453"/>
    </ligand>
</feature>
<organism>
    <name type="scientific">Streptococcus pneumoniae (strain CGSP14)</name>
    <dbReference type="NCBI Taxonomy" id="516950"/>
    <lineage>
        <taxon>Bacteria</taxon>
        <taxon>Bacillati</taxon>
        <taxon>Bacillota</taxon>
        <taxon>Bacilli</taxon>
        <taxon>Lactobacillales</taxon>
        <taxon>Streptococcaceae</taxon>
        <taxon>Streptococcus</taxon>
    </lineage>
</organism>
<keyword id="KW-0648">Protein biosynthesis</keyword>
<keyword id="KW-0808">Transferase</keyword>
<name>FMT_STRPS</name>
<sequence>MTKLIFMGTPDFSATVLKGLLTDDRYEILAVVTQPDRAVGRKKVIQETPVKQAAKEAGLSIYQPEKLSGSPEMEDLMKLGADGIVTAAFGQFLPSKLLDSMDFAVNVHASLLPRHRGGAPIHYALIQGDEEAGVTIMEMVKEMDAGDMISRRSIPITDEDNVGTLFEKLALVGRDLLLDTLPAYIAGDIKPEPQDTSQVTFSPNIKSEEEKLNWNKTNRQLFNQIRGMNPWPVAHTFLKGDRFKIYEALPVEGQGNPGEILSIGKKELIVATAEGALSLKQVQPAGKPKMDIASFLNGVGRTLTVGERFGD</sequence>
<comment type="function">
    <text evidence="1">Attaches a formyl group to the free amino group of methionyl-tRNA(fMet). The formyl group appears to play a dual role in the initiator identity of N-formylmethionyl-tRNA by promoting its recognition by IF2 and preventing the misappropriation of this tRNA by the elongation apparatus.</text>
</comment>
<comment type="catalytic activity">
    <reaction evidence="1">
        <text>L-methionyl-tRNA(fMet) + (6R)-10-formyltetrahydrofolate = N-formyl-L-methionyl-tRNA(fMet) + (6S)-5,6,7,8-tetrahydrofolate + H(+)</text>
        <dbReference type="Rhea" id="RHEA:24380"/>
        <dbReference type="Rhea" id="RHEA-COMP:9952"/>
        <dbReference type="Rhea" id="RHEA-COMP:9953"/>
        <dbReference type="ChEBI" id="CHEBI:15378"/>
        <dbReference type="ChEBI" id="CHEBI:57453"/>
        <dbReference type="ChEBI" id="CHEBI:78530"/>
        <dbReference type="ChEBI" id="CHEBI:78844"/>
        <dbReference type="ChEBI" id="CHEBI:195366"/>
        <dbReference type="EC" id="2.1.2.9"/>
    </reaction>
</comment>
<comment type="similarity">
    <text evidence="1">Belongs to the Fmt family.</text>
</comment>
<proteinExistence type="inferred from homology"/>
<protein>
    <recommendedName>
        <fullName evidence="1">Methionyl-tRNA formyltransferase</fullName>
        <ecNumber evidence="1">2.1.2.9</ecNumber>
    </recommendedName>
</protein>
<evidence type="ECO:0000255" key="1">
    <source>
        <dbReference type="HAMAP-Rule" id="MF_00182"/>
    </source>
</evidence>
<reference key="1">
    <citation type="journal article" date="2009" name="BMC Genomics">
        <title>Genome evolution driven by host adaptations results in a more virulent and antimicrobial-resistant Streptococcus pneumoniae serotype 14.</title>
        <authorList>
            <person name="Ding F."/>
            <person name="Tang P."/>
            <person name="Hsu M.-H."/>
            <person name="Cui P."/>
            <person name="Hu S."/>
            <person name="Yu J."/>
            <person name="Chiu C.-H."/>
        </authorList>
    </citation>
    <scope>NUCLEOTIDE SEQUENCE [LARGE SCALE GENOMIC DNA]</scope>
    <source>
        <strain>CGSP14</strain>
    </source>
</reference>
<dbReference type="EC" id="2.1.2.9" evidence="1"/>
<dbReference type="EMBL" id="CP001033">
    <property type="protein sequence ID" value="ACB90960.1"/>
    <property type="molecule type" value="Genomic_DNA"/>
</dbReference>
<dbReference type="RefSeq" id="WP_000163696.1">
    <property type="nucleotide sequence ID" value="NC_010582.1"/>
</dbReference>
<dbReference type="SMR" id="B2IS85"/>
<dbReference type="KEGG" id="spw:SPCG_1708"/>
<dbReference type="HOGENOM" id="CLU_033347_1_1_9"/>
<dbReference type="GO" id="GO:0005829">
    <property type="term" value="C:cytosol"/>
    <property type="evidence" value="ECO:0007669"/>
    <property type="project" value="TreeGrafter"/>
</dbReference>
<dbReference type="GO" id="GO:0004479">
    <property type="term" value="F:methionyl-tRNA formyltransferase activity"/>
    <property type="evidence" value="ECO:0007669"/>
    <property type="project" value="UniProtKB-UniRule"/>
</dbReference>
<dbReference type="CDD" id="cd08646">
    <property type="entry name" value="FMT_core_Met-tRNA-FMT_N"/>
    <property type="match status" value="1"/>
</dbReference>
<dbReference type="CDD" id="cd08704">
    <property type="entry name" value="Met_tRNA_FMT_C"/>
    <property type="match status" value="1"/>
</dbReference>
<dbReference type="FunFam" id="3.10.25.10:FF:000004">
    <property type="entry name" value="Methionyl-tRNA formyltransferase"/>
    <property type="match status" value="1"/>
</dbReference>
<dbReference type="FunFam" id="3.40.50.170:FF:000004">
    <property type="entry name" value="Methionyl-tRNA formyltransferase"/>
    <property type="match status" value="1"/>
</dbReference>
<dbReference type="Gene3D" id="3.10.25.10">
    <property type="entry name" value="Formyl transferase, C-terminal domain"/>
    <property type="match status" value="1"/>
</dbReference>
<dbReference type="Gene3D" id="3.40.50.170">
    <property type="entry name" value="Formyl transferase, N-terminal domain"/>
    <property type="match status" value="1"/>
</dbReference>
<dbReference type="HAMAP" id="MF_00182">
    <property type="entry name" value="Formyl_trans"/>
    <property type="match status" value="1"/>
</dbReference>
<dbReference type="InterPro" id="IPR005794">
    <property type="entry name" value="Fmt"/>
</dbReference>
<dbReference type="InterPro" id="IPR005793">
    <property type="entry name" value="Formyl_trans_C"/>
</dbReference>
<dbReference type="InterPro" id="IPR037022">
    <property type="entry name" value="Formyl_trans_C_sf"/>
</dbReference>
<dbReference type="InterPro" id="IPR002376">
    <property type="entry name" value="Formyl_transf_N"/>
</dbReference>
<dbReference type="InterPro" id="IPR036477">
    <property type="entry name" value="Formyl_transf_N_sf"/>
</dbReference>
<dbReference type="InterPro" id="IPR011034">
    <property type="entry name" value="Formyl_transferase-like_C_sf"/>
</dbReference>
<dbReference type="InterPro" id="IPR001555">
    <property type="entry name" value="GART_AS"/>
</dbReference>
<dbReference type="InterPro" id="IPR044135">
    <property type="entry name" value="Met-tRNA-FMT_C"/>
</dbReference>
<dbReference type="InterPro" id="IPR041711">
    <property type="entry name" value="Met-tRNA-FMT_N"/>
</dbReference>
<dbReference type="NCBIfam" id="TIGR00460">
    <property type="entry name" value="fmt"/>
    <property type="match status" value="1"/>
</dbReference>
<dbReference type="PANTHER" id="PTHR11138">
    <property type="entry name" value="METHIONYL-TRNA FORMYLTRANSFERASE"/>
    <property type="match status" value="1"/>
</dbReference>
<dbReference type="PANTHER" id="PTHR11138:SF5">
    <property type="entry name" value="METHIONYL-TRNA FORMYLTRANSFERASE, MITOCHONDRIAL"/>
    <property type="match status" value="1"/>
</dbReference>
<dbReference type="Pfam" id="PF02911">
    <property type="entry name" value="Formyl_trans_C"/>
    <property type="match status" value="1"/>
</dbReference>
<dbReference type="Pfam" id="PF00551">
    <property type="entry name" value="Formyl_trans_N"/>
    <property type="match status" value="1"/>
</dbReference>
<dbReference type="SUPFAM" id="SSF50486">
    <property type="entry name" value="FMT C-terminal domain-like"/>
    <property type="match status" value="1"/>
</dbReference>
<dbReference type="SUPFAM" id="SSF53328">
    <property type="entry name" value="Formyltransferase"/>
    <property type="match status" value="1"/>
</dbReference>
<dbReference type="PROSITE" id="PS00373">
    <property type="entry name" value="GART"/>
    <property type="match status" value="1"/>
</dbReference>
<accession>B2IS85</accession>
<gene>
    <name evidence="1" type="primary">fmt</name>
    <name type="ordered locus">SPCG_1708</name>
</gene>